<feature type="chain" id="PRO_0000181488" description="Large ribosomal subunit protein bL25">
    <location>
        <begin position="1"/>
        <end position="94"/>
    </location>
</feature>
<accession>Q7N352</accession>
<proteinExistence type="inferred from homology"/>
<comment type="function">
    <text evidence="1">This is one of the proteins that binds to the 5S RNA in the ribosome where it forms part of the central protuberance.</text>
</comment>
<comment type="subunit">
    <text evidence="1">Part of the 50S ribosomal subunit; part of the 5S rRNA/L5/L18/L25 subcomplex. Contacts the 5S rRNA. Binds to the 5S rRNA independently of L5 and L18.</text>
</comment>
<comment type="similarity">
    <text evidence="1">Belongs to the bacterial ribosomal protein bL25 family.</text>
</comment>
<gene>
    <name evidence="1" type="primary">rplY</name>
    <name type="ordered locus">plu2869</name>
</gene>
<evidence type="ECO:0000255" key="1">
    <source>
        <dbReference type="HAMAP-Rule" id="MF_01336"/>
    </source>
</evidence>
<evidence type="ECO:0000305" key="2"/>
<keyword id="KW-1185">Reference proteome</keyword>
<keyword id="KW-0687">Ribonucleoprotein</keyword>
<keyword id="KW-0689">Ribosomal protein</keyword>
<keyword id="KW-0694">RNA-binding</keyword>
<keyword id="KW-0699">rRNA-binding</keyword>
<reference key="1">
    <citation type="journal article" date="2003" name="Nat. Biotechnol.">
        <title>The genome sequence of the entomopathogenic bacterium Photorhabdus luminescens.</title>
        <authorList>
            <person name="Duchaud E."/>
            <person name="Rusniok C."/>
            <person name="Frangeul L."/>
            <person name="Buchrieser C."/>
            <person name="Givaudan A."/>
            <person name="Taourit S."/>
            <person name="Bocs S."/>
            <person name="Boursaux-Eude C."/>
            <person name="Chandler M."/>
            <person name="Charles J.-F."/>
            <person name="Dassa E."/>
            <person name="Derose R."/>
            <person name="Derzelle S."/>
            <person name="Freyssinet G."/>
            <person name="Gaudriault S."/>
            <person name="Medigue C."/>
            <person name="Lanois A."/>
            <person name="Powell K."/>
            <person name="Siguier P."/>
            <person name="Vincent R."/>
            <person name="Wingate V."/>
            <person name="Zouine M."/>
            <person name="Glaser P."/>
            <person name="Boemare N."/>
            <person name="Danchin A."/>
            <person name="Kunst F."/>
        </authorList>
    </citation>
    <scope>NUCLEOTIDE SEQUENCE [LARGE SCALE GENOMIC DNA]</scope>
    <source>
        <strain>DSM 15139 / CIP 105565 / TT01</strain>
    </source>
</reference>
<dbReference type="EMBL" id="BX571868">
    <property type="protein sequence ID" value="CAE15243.1"/>
    <property type="molecule type" value="Genomic_DNA"/>
</dbReference>
<dbReference type="RefSeq" id="WP_011147089.1">
    <property type="nucleotide sequence ID" value="NC_005126.1"/>
</dbReference>
<dbReference type="SMR" id="Q7N352"/>
<dbReference type="STRING" id="243265.plu2869"/>
<dbReference type="GeneID" id="48849131"/>
<dbReference type="KEGG" id="plu:plu2869"/>
<dbReference type="eggNOG" id="COG1825">
    <property type="taxonomic scope" value="Bacteria"/>
</dbReference>
<dbReference type="HOGENOM" id="CLU_137946_0_0_6"/>
<dbReference type="OrthoDB" id="9806411at2"/>
<dbReference type="Proteomes" id="UP000002514">
    <property type="component" value="Chromosome"/>
</dbReference>
<dbReference type="GO" id="GO:0022625">
    <property type="term" value="C:cytosolic large ribosomal subunit"/>
    <property type="evidence" value="ECO:0007669"/>
    <property type="project" value="TreeGrafter"/>
</dbReference>
<dbReference type="GO" id="GO:0008097">
    <property type="term" value="F:5S rRNA binding"/>
    <property type="evidence" value="ECO:0007669"/>
    <property type="project" value="InterPro"/>
</dbReference>
<dbReference type="GO" id="GO:0003735">
    <property type="term" value="F:structural constituent of ribosome"/>
    <property type="evidence" value="ECO:0007669"/>
    <property type="project" value="InterPro"/>
</dbReference>
<dbReference type="GO" id="GO:0006412">
    <property type="term" value="P:translation"/>
    <property type="evidence" value="ECO:0007669"/>
    <property type="project" value="UniProtKB-UniRule"/>
</dbReference>
<dbReference type="CDD" id="cd00495">
    <property type="entry name" value="Ribosomal_L25_TL5_CTC"/>
    <property type="match status" value="1"/>
</dbReference>
<dbReference type="FunFam" id="2.40.240.10:FF:000002">
    <property type="entry name" value="50S ribosomal protein L25"/>
    <property type="match status" value="1"/>
</dbReference>
<dbReference type="Gene3D" id="2.40.240.10">
    <property type="entry name" value="Ribosomal Protein L25, Chain P"/>
    <property type="match status" value="1"/>
</dbReference>
<dbReference type="HAMAP" id="MF_01336">
    <property type="entry name" value="Ribosomal_bL25"/>
    <property type="match status" value="1"/>
</dbReference>
<dbReference type="InterPro" id="IPR020056">
    <property type="entry name" value="Rbsml_bL25/Gln-tRNA_synth_N"/>
</dbReference>
<dbReference type="InterPro" id="IPR011035">
    <property type="entry name" value="Ribosomal_bL25/Gln-tRNA_synth"/>
</dbReference>
<dbReference type="InterPro" id="IPR020055">
    <property type="entry name" value="Ribosomal_bL25_short"/>
</dbReference>
<dbReference type="InterPro" id="IPR029751">
    <property type="entry name" value="Ribosomal_L25_dom"/>
</dbReference>
<dbReference type="InterPro" id="IPR020930">
    <property type="entry name" value="Ribosomal_uL5_bac-type"/>
</dbReference>
<dbReference type="NCBIfam" id="NF004612">
    <property type="entry name" value="PRK05943.1"/>
    <property type="match status" value="1"/>
</dbReference>
<dbReference type="PANTHER" id="PTHR33284">
    <property type="entry name" value="RIBOSOMAL PROTEIN L25/GLN-TRNA SYNTHETASE, ANTI-CODON-BINDING DOMAIN-CONTAINING PROTEIN"/>
    <property type="match status" value="1"/>
</dbReference>
<dbReference type="PANTHER" id="PTHR33284:SF1">
    <property type="entry name" value="RIBOSOMAL PROTEIN L25_GLN-TRNA SYNTHETASE, ANTI-CODON-BINDING DOMAIN-CONTAINING PROTEIN"/>
    <property type="match status" value="1"/>
</dbReference>
<dbReference type="Pfam" id="PF01386">
    <property type="entry name" value="Ribosomal_L25p"/>
    <property type="match status" value="1"/>
</dbReference>
<dbReference type="SUPFAM" id="SSF50715">
    <property type="entry name" value="Ribosomal protein L25-like"/>
    <property type="match status" value="1"/>
</dbReference>
<sequence length="94" mass="10778">MFTINAEVRKEQGKGASRRLRRANKFPAIVYGGNQELVSIELDHDQVINMEQKAEFYSDVLTLVIDGKETKVKVQAVQRHPFKPKLAHIDFLRA</sequence>
<protein>
    <recommendedName>
        <fullName evidence="1">Large ribosomal subunit protein bL25</fullName>
    </recommendedName>
    <alternativeName>
        <fullName evidence="2">50S ribosomal protein L25</fullName>
    </alternativeName>
</protein>
<organism>
    <name type="scientific">Photorhabdus laumondii subsp. laumondii (strain DSM 15139 / CIP 105565 / TT01)</name>
    <name type="common">Photorhabdus luminescens subsp. laumondii</name>
    <dbReference type="NCBI Taxonomy" id="243265"/>
    <lineage>
        <taxon>Bacteria</taxon>
        <taxon>Pseudomonadati</taxon>
        <taxon>Pseudomonadota</taxon>
        <taxon>Gammaproteobacteria</taxon>
        <taxon>Enterobacterales</taxon>
        <taxon>Morganellaceae</taxon>
        <taxon>Photorhabdus</taxon>
    </lineage>
</organism>
<name>RL25_PHOLL</name>